<evidence type="ECO:0000255" key="1">
    <source>
        <dbReference type="HAMAP-Rule" id="MF_01800"/>
    </source>
</evidence>
<evidence type="ECO:0000256" key="2">
    <source>
        <dbReference type="SAM" id="MobiDB-lite"/>
    </source>
</evidence>
<protein>
    <recommendedName>
        <fullName evidence="1">Chromosome partition protein MukB</fullName>
    </recommendedName>
    <alternativeName>
        <fullName evidence="1">Structural maintenance of chromosome-related protein</fullName>
    </alternativeName>
</protein>
<comment type="function">
    <text evidence="1">Plays a central role in chromosome condensation, segregation and cell cycle progression. Functions as a homodimer, which is essential for chromosome partition. Involved in negative DNA supercoiling in vivo, and by this means organize and compact chromosomes. May achieve or facilitate chromosome segregation by condensation DNA from both sides of a centrally located replisome during cell division.</text>
</comment>
<comment type="subunit">
    <text evidence="1">Homodimerization via its hinge domain. Binds to DNA via its C-terminal region. Interacts, and probably forms a ternary complex, with MukE and MukF via its C-terminal region. The complex formation is stimulated by calcium or magnesium. Interacts with tubulin-related protein FtsZ.</text>
</comment>
<comment type="subcellular location">
    <subcellularLocation>
        <location evidence="1">Cytoplasm</location>
        <location evidence="1">Nucleoid</location>
    </subcellularLocation>
    <text evidence="1">Restricted to the nucleoid region.</text>
</comment>
<comment type="domain">
    <text evidence="1">The hinge domain, which separates the large intramolecular coiled coil regions, allows the homodimerization, forming a V-shaped homodimer.</text>
</comment>
<comment type="similarity">
    <text evidence="1">Belongs to the SMC family. MukB subfamily.</text>
</comment>
<reference key="1">
    <citation type="submission" date="2007-03" db="EMBL/GenBank/DDBJ databases">
        <authorList>
            <person name="Heidelberg J."/>
        </authorList>
    </citation>
    <scope>NUCLEOTIDE SEQUENCE [LARGE SCALE GENOMIC DNA]</scope>
    <source>
        <strain>ATCC 39541 / Classical Ogawa 395 / O395</strain>
    </source>
</reference>
<reference key="2">
    <citation type="journal article" date="2008" name="PLoS ONE">
        <title>A recalibrated molecular clock and independent origins for the cholera pandemic clones.</title>
        <authorList>
            <person name="Feng L."/>
            <person name="Reeves P.R."/>
            <person name="Lan R."/>
            <person name="Ren Y."/>
            <person name="Gao C."/>
            <person name="Zhou Z."/>
            <person name="Ren Y."/>
            <person name="Cheng J."/>
            <person name="Wang W."/>
            <person name="Wang J."/>
            <person name="Qian W."/>
            <person name="Li D."/>
            <person name="Wang L."/>
        </authorList>
    </citation>
    <scope>NUCLEOTIDE SEQUENCE [LARGE SCALE GENOMIC DNA]</scope>
    <source>
        <strain>ATCC 39541 / Classical Ogawa 395 / O395</strain>
    </source>
</reference>
<sequence length="1491" mass="169898">MIERGKYQSLTMINWNGFFARTFDIDNLVTTLSGGNGAGKSTTMAAFITALIPDQSLLHFRNTTEAGSSQASRDKGLYGKLQAGACYAALDVVNSRNQRLLFAVKLQQVAGRDKKVDIKPFLIQGLPSHVKPTDVLVETVSDKHARVRQINEVKDAVGQIEGAHFKSFPSIVDYHAQMFEFGVIPKKLRNSSDRSKFYRLIEASLYGGISSAITRSLRDYLLPQNGGVKKAFQDMESALRENRMTLEAIKTTQADRDLFKHLITESTNYVAADYMRHANDRRNKVGQTLVLRGELFSSRETLIEQNSLLNRVHEELELLVEQESALEQDYQGASDHLQLVQNALRQQEKIERYQEDLEELNFRLEEQMMVVEEANERVMMAEERATISEEEVDSLKSQLADYQQALDVQQTRALQYQQAVQALDKARRLLDKPELTAESAQALATQLKAEQETRTSELLALKHKLDMSSAAAQQFNHAFDLVKRVLGEVARSEASKQAQQVIRQAREAQNVLQNEAQWQAQQRDLERQLEQQRSVRELATQYHKQHMVALDDAATVELERERHSALLEELETEQENCREQRGQLRHQEQELQTQIARFESIAPAWIKANDALETLREQSGAELADSQSVMAHMQQVLELEKAQSMAKDKLAERRAKLDSEIERLASPGGSNDPRLKGLADTLGGVLLSEIYDDITIDDAPYFSAMYGPARHAIVVSDLSGIKEKLVELDDCPEDLYLIEGDVDAFDDSSFNAEELEGAVCVQLNQRQMRYSRFPAIPLFGRAAREQRLELLREERDDVVEQHAKASFDSQKLQRLYASFNQFVAMHLQVAFDADPEQALANARDKRNQLLRSISEFEAQEQQLRSQLQASKQALAALDKLAPQMGLLDEETLEARYQELEEKLQQLSEAKAFIAAHGRTISELEKVAAVLDADPEQFDALEQQYQQADQALQQLKAQIFALSDLLERRHHFAYSDSVDLLNQSSELSEQLKAKLVQAESERTRSREELKQAQAQLSQYNQLLASLKSSHQAKLETVQEFKQELQEFGVHADEGAIERAQRRRDELQERLHTSRSRKSEYERTITSTELEMKALVKRMKKVEKDYQDLRTFVVNAKAGWCSVLRLARQNDVERRLHKRELAYLSADELRSMSDKSLGALRLAVANNEDLRDALRQSEDNSRPERKVLFYIAVYQHLRERIRQDIIRTDDPVEAIEEMEVELARLTEELTQREQRLAISSDSVASIIRKTIQREQNRIRMLNQGLSNISFGQVNGVRLNVKVRESHEILLAGLSEQQAQHKDLFESARYTFSEAMAKLFQRVNPHIDMGQRSPQVLGEELLDYRNYLELSVEVNRGSDGWLQAESGALSTGEAIGTGQSILLMVVQSWEEESRRLRSKDIVPCRLLFLDEAARLDAKSIATLFELCERLDMQLLIAAPENISPEKGTTYKLVRKVFKDHEHVHVVGLRGFAQTEKPKTAEQKFAEELAGELTE</sequence>
<keyword id="KW-0067">ATP-binding</keyword>
<keyword id="KW-0131">Cell cycle</keyword>
<keyword id="KW-0132">Cell division</keyword>
<keyword id="KW-0159">Chromosome partition</keyword>
<keyword id="KW-0175">Coiled coil</keyword>
<keyword id="KW-0963">Cytoplasm</keyword>
<keyword id="KW-0226">DNA condensation</keyword>
<keyword id="KW-0238">DNA-binding</keyword>
<keyword id="KW-0547">Nucleotide-binding</keyword>
<gene>
    <name evidence="1" type="primary">mukB</name>
    <name type="ordered locus">VC0395_A1317</name>
    <name type="ordered locus">VC395_1831</name>
</gene>
<organism>
    <name type="scientific">Vibrio cholerae serotype O1 (strain ATCC 39541 / Classical Ogawa 395 / O395)</name>
    <dbReference type="NCBI Taxonomy" id="345073"/>
    <lineage>
        <taxon>Bacteria</taxon>
        <taxon>Pseudomonadati</taxon>
        <taxon>Pseudomonadota</taxon>
        <taxon>Gammaproteobacteria</taxon>
        <taxon>Vibrionales</taxon>
        <taxon>Vibrionaceae</taxon>
        <taxon>Vibrio</taxon>
    </lineage>
</organism>
<name>MUKB_VIBC3</name>
<dbReference type="EMBL" id="CP000627">
    <property type="protein sequence ID" value="ABQ20826.1"/>
    <property type="molecule type" value="Genomic_DNA"/>
</dbReference>
<dbReference type="EMBL" id="CP001235">
    <property type="protein sequence ID" value="ACP09828.1"/>
    <property type="molecule type" value="Genomic_DNA"/>
</dbReference>
<dbReference type="RefSeq" id="WP_000572778.1">
    <property type="nucleotide sequence ID" value="NZ_JAACZH010000016.1"/>
</dbReference>
<dbReference type="SMR" id="A5F7H8"/>
<dbReference type="KEGG" id="vco:VC0395_A1317"/>
<dbReference type="KEGG" id="vcr:VC395_1831"/>
<dbReference type="PATRIC" id="fig|345073.21.peg.1774"/>
<dbReference type="eggNOG" id="COG3096">
    <property type="taxonomic scope" value="Bacteria"/>
</dbReference>
<dbReference type="HOGENOM" id="CLU_004430_0_0_6"/>
<dbReference type="OrthoDB" id="6722439at2"/>
<dbReference type="Proteomes" id="UP000000249">
    <property type="component" value="Chromosome 2"/>
</dbReference>
<dbReference type="GO" id="GO:0005737">
    <property type="term" value="C:cytoplasm"/>
    <property type="evidence" value="ECO:0007669"/>
    <property type="project" value="UniProtKB-UniRule"/>
</dbReference>
<dbReference type="GO" id="GO:0009295">
    <property type="term" value="C:nucleoid"/>
    <property type="evidence" value="ECO:0007669"/>
    <property type="project" value="UniProtKB-SubCell"/>
</dbReference>
<dbReference type="GO" id="GO:0005524">
    <property type="term" value="F:ATP binding"/>
    <property type="evidence" value="ECO:0007669"/>
    <property type="project" value="UniProtKB-UniRule"/>
</dbReference>
<dbReference type="GO" id="GO:0003677">
    <property type="term" value="F:DNA binding"/>
    <property type="evidence" value="ECO:0007669"/>
    <property type="project" value="UniProtKB-UniRule"/>
</dbReference>
<dbReference type="GO" id="GO:0051301">
    <property type="term" value="P:cell division"/>
    <property type="evidence" value="ECO:0007669"/>
    <property type="project" value="UniProtKB-KW"/>
</dbReference>
<dbReference type="GO" id="GO:0030261">
    <property type="term" value="P:chromosome condensation"/>
    <property type="evidence" value="ECO:0007669"/>
    <property type="project" value="UniProtKB-KW"/>
</dbReference>
<dbReference type="GO" id="GO:0007059">
    <property type="term" value="P:chromosome segregation"/>
    <property type="evidence" value="ECO:0007669"/>
    <property type="project" value="UniProtKB-UniRule"/>
</dbReference>
<dbReference type="GO" id="GO:0006260">
    <property type="term" value="P:DNA replication"/>
    <property type="evidence" value="ECO:0007669"/>
    <property type="project" value="UniProtKB-UniRule"/>
</dbReference>
<dbReference type="FunFam" id="3.30.70.3500:FF:000001">
    <property type="entry name" value="Chromosome partition protein MukB"/>
    <property type="match status" value="1"/>
</dbReference>
<dbReference type="FunFam" id="3.40.1140.10:FF:000001">
    <property type="entry name" value="Chromosome partition protein MukB"/>
    <property type="match status" value="1"/>
</dbReference>
<dbReference type="FunFam" id="3.40.1140.10:FF:000002">
    <property type="entry name" value="Chromosome partition protein MukB"/>
    <property type="match status" value="1"/>
</dbReference>
<dbReference type="Gene3D" id="1.20.58.850">
    <property type="match status" value="1"/>
</dbReference>
<dbReference type="Gene3D" id="3.40.1140.10">
    <property type="match status" value="2"/>
</dbReference>
<dbReference type="Gene3D" id="1.20.5.420">
    <property type="entry name" value="Immunoglobulin FC, subunit C"/>
    <property type="match status" value="1"/>
</dbReference>
<dbReference type="Gene3D" id="3.30.70.3500">
    <property type="entry name" value="MukB, hinge domain"/>
    <property type="match status" value="1"/>
</dbReference>
<dbReference type="HAMAP" id="MF_01800">
    <property type="entry name" value="MukB"/>
    <property type="match status" value="1"/>
</dbReference>
<dbReference type="InterPro" id="IPR012090">
    <property type="entry name" value="MukB"/>
</dbReference>
<dbReference type="InterPro" id="IPR050308">
    <property type="entry name" value="MukB/SMC"/>
</dbReference>
<dbReference type="InterPro" id="IPR032520">
    <property type="entry name" value="MukB_hinge"/>
</dbReference>
<dbReference type="InterPro" id="IPR042501">
    <property type="entry name" value="MukB_hinge_sf"/>
</dbReference>
<dbReference type="InterPro" id="IPR007406">
    <property type="entry name" value="MukB_N_dom"/>
</dbReference>
<dbReference type="InterPro" id="IPR027417">
    <property type="entry name" value="P-loop_NTPase"/>
</dbReference>
<dbReference type="NCBIfam" id="NF003422">
    <property type="entry name" value="PRK04863.1"/>
    <property type="match status" value="1"/>
</dbReference>
<dbReference type="PANTHER" id="PTHR42963">
    <property type="entry name" value="CHROMOSOME PARTITION PROTEIN MUKB"/>
    <property type="match status" value="1"/>
</dbReference>
<dbReference type="PANTHER" id="PTHR42963:SF1">
    <property type="entry name" value="DUF4476 DOMAIN-CONTAINING PROTEIN"/>
    <property type="match status" value="1"/>
</dbReference>
<dbReference type="Pfam" id="PF04310">
    <property type="entry name" value="MukB"/>
    <property type="match status" value="1"/>
</dbReference>
<dbReference type="Pfam" id="PF16330">
    <property type="entry name" value="MukB_hinge"/>
    <property type="match status" value="1"/>
</dbReference>
<dbReference type="Pfam" id="PF13558">
    <property type="entry name" value="SbcC_Walker_B"/>
    <property type="match status" value="1"/>
</dbReference>
<dbReference type="PIRSF" id="PIRSF005246">
    <property type="entry name" value="MukB"/>
    <property type="match status" value="1"/>
</dbReference>
<dbReference type="SUPFAM" id="SSF52540">
    <property type="entry name" value="P-loop containing nucleoside triphosphate hydrolases"/>
    <property type="match status" value="2"/>
</dbReference>
<proteinExistence type="inferred from homology"/>
<accession>A5F7H8</accession>
<accession>C3M1B2</accession>
<feature type="chain" id="PRO_1000073658" description="Chromosome partition protein MukB">
    <location>
        <begin position="1"/>
        <end position="1491"/>
    </location>
</feature>
<feature type="region of interest" description="Flexible hinge" evidence="1">
    <location>
        <begin position="667"/>
        <end position="784"/>
    </location>
</feature>
<feature type="region of interest" description="Disordered" evidence="2">
    <location>
        <begin position="1059"/>
        <end position="1080"/>
    </location>
</feature>
<feature type="coiled-coil region" evidence="1">
    <location>
        <begin position="302"/>
        <end position="418"/>
    </location>
</feature>
<feature type="coiled-coil region" evidence="1">
    <location>
        <begin position="488"/>
        <end position="600"/>
    </location>
</feature>
<feature type="coiled-coil region" evidence="1">
    <location>
        <begin position="638"/>
        <end position="666"/>
    </location>
</feature>
<feature type="coiled-coil region" evidence="1">
    <location>
        <begin position="781"/>
        <end position="806"/>
    </location>
</feature>
<feature type="coiled-coil region" evidence="1">
    <location>
        <begin position="836"/>
        <end position="1109"/>
    </location>
</feature>
<feature type="coiled-coil region" evidence="1">
    <location>
        <begin position="1210"/>
        <end position="1239"/>
    </location>
</feature>
<feature type="binding site" evidence="1">
    <location>
        <begin position="34"/>
        <end position="41"/>
    </location>
    <ligand>
        <name>ATP</name>
        <dbReference type="ChEBI" id="CHEBI:30616"/>
    </ligand>
</feature>